<name>DNAG_STAMF</name>
<keyword id="KW-0235">DNA replication</keyword>
<keyword id="KW-0240">DNA-directed RNA polymerase</keyword>
<keyword id="KW-0271">Exosome</keyword>
<keyword id="KW-0460">Magnesium</keyword>
<keyword id="KW-0479">Metal-binding</keyword>
<keyword id="KW-0548">Nucleotidyltransferase</keyword>
<keyword id="KW-0639">Primosome</keyword>
<keyword id="KW-1185">Reference proteome</keyword>
<keyword id="KW-0804">Transcription</keyword>
<keyword id="KW-0808">Transferase</keyword>
<evidence type="ECO:0000255" key="1">
    <source>
        <dbReference type="HAMAP-Rule" id="MF_00007"/>
    </source>
</evidence>
<gene>
    <name evidence="1" type="primary">dnaG</name>
    <name type="ordered locus">Smar_0889</name>
</gene>
<feature type="chain" id="PRO_0000321494" description="DNA primase DnaG">
    <location>
        <begin position="1"/>
        <end position="424"/>
    </location>
</feature>
<feature type="domain" description="Toprim" evidence="1">
    <location>
        <begin position="166"/>
        <end position="241"/>
    </location>
</feature>
<feature type="binding site" evidence="1">
    <location>
        <position position="172"/>
    </location>
    <ligand>
        <name>Mg(2+)</name>
        <dbReference type="ChEBI" id="CHEBI:18420"/>
        <label>1</label>
        <note>catalytic</note>
    </ligand>
</feature>
<feature type="binding site" evidence="1">
    <location>
        <position position="215"/>
    </location>
    <ligand>
        <name>Mg(2+)</name>
        <dbReference type="ChEBI" id="CHEBI:18420"/>
        <label>1</label>
        <note>catalytic</note>
    </ligand>
</feature>
<feature type="binding site" evidence="1">
    <location>
        <position position="215"/>
    </location>
    <ligand>
        <name>Mg(2+)</name>
        <dbReference type="ChEBI" id="CHEBI:18420"/>
        <label>2</label>
    </ligand>
</feature>
<feature type="binding site" evidence="1">
    <location>
        <position position="217"/>
    </location>
    <ligand>
        <name>Mg(2+)</name>
        <dbReference type="ChEBI" id="CHEBI:18420"/>
        <label>2</label>
    </ligand>
</feature>
<reference key="1">
    <citation type="journal article" date="2009" name="BMC Genomics">
        <title>The complete genome sequence of Staphylothermus marinus reveals differences in sulfur metabolism among heterotrophic Crenarchaeota.</title>
        <authorList>
            <person name="Anderson I.J."/>
            <person name="Dharmarajan L."/>
            <person name="Rodriguez J."/>
            <person name="Hooper S."/>
            <person name="Porat I."/>
            <person name="Ulrich L.E."/>
            <person name="Elkins J.G."/>
            <person name="Mavromatis K."/>
            <person name="Sun H."/>
            <person name="Land M."/>
            <person name="Lapidus A."/>
            <person name="Lucas S."/>
            <person name="Barry K."/>
            <person name="Huber H."/>
            <person name="Zhulin I.B."/>
            <person name="Whitman W.B."/>
            <person name="Mukhopadhyay B."/>
            <person name="Woese C."/>
            <person name="Bristow J."/>
            <person name="Kyrpides N."/>
        </authorList>
    </citation>
    <scope>NUCLEOTIDE SEQUENCE [LARGE SCALE GENOMIC DNA]</scope>
    <source>
        <strain>ATCC 43588 / DSM 3639 / JCM 9404 / F1</strain>
    </source>
</reference>
<reference key="2">
    <citation type="journal article" date="2009" name="Stand. Genomic Sci.">
        <title>Complete genome sequence of Staphylothermus marinus Stetter and Fiala 1986 type strain F1.</title>
        <authorList>
            <person name="Anderson I.J."/>
            <person name="Sun H."/>
            <person name="Lapidus A."/>
            <person name="Copeland A."/>
            <person name="Glavina Del Rio T."/>
            <person name="Tice H."/>
            <person name="Dalin E."/>
            <person name="Lucas S."/>
            <person name="Barry K."/>
            <person name="Land M."/>
            <person name="Richardson P."/>
            <person name="Huber H."/>
            <person name="Kyrpides N.C."/>
        </authorList>
    </citation>
    <scope>NUCLEOTIDE SEQUENCE [LARGE SCALE GENOMIC DNA]</scope>
    <source>
        <strain>ATCC 43588 / DSM 3639 / JCM 9404 / F1</strain>
    </source>
</reference>
<accession>A3DMX9</accession>
<organism>
    <name type="scientific">Staphylothermus marinus (strain ATCC 43588 / DSM 3639 / JCM 9404 / F1)</name>
    <dbReference type="NCBI Taxonomy" id="399550"/>
    <lineage>
        <taxon>Archaea</taxon>
        <taxon>Thermoproteota</taxon>
        <taxon>Thermoprotei</taxon>
        <taxon>Desulfurococcales</taxon>
        <taxon>Desulfurococcaceae</taxon>
        <taxon>Staphylothermus</taxon>
    </lineage>
</organism>
<sequence length="424" mass="47820">MAKYLINARVEVDGVVEKHDIIGAIFGQTEGLFGEQFDLRTLQDKNRIGRIQVMTKIHNGKTIGELIIPSNLDRLETALVAAMIESVDRVGPYSARIEVVDIIDVRLEKIKKIIDRAIEILHEWSKEKAPDIKEILKEMQEALKVPEPQKYGPEQLPAGPGVDESDTIIIVEGRADVINLLRYGFTNVIALGGARKVPNTIKNLAKKKKVIVFLDGDHGGDLILKELLRTIKVDFIARAPEGREVEELTGKEIREALSKAVPTREYLEKLAKQGNKEAQYLLQVQERLAREVAEQIKPQVKVEEKKPVEKPVPKPPKTVEEVVEAVSIPLRIREDIKSLYGTLEAILYDNEWNSVKRLPVRDLVNTLDELDENNVQAIVMDGIITQRLIDKASEKKVKMIIAAKIGRINYKPPEILILTFNDIM</sequence>
<dbReference type="EC" id="2.7.7.101" evidence="1"/>
<dbReference type="EMBL" id="CP000575">
    <property type="protein sequence ID" value="ABN69989.1"/>
    <property type="molecule type" value="Genomic_DNA"/>
</dbReference>
<dbReference type="RefSeq" id="WP_011839180.1">
    <property type="nucleotide sequence ID" value="NC_009033.1"/>
</dbReference>
<dbReference type="SMR" id="A3DMX9"/>
<dbReference type="STRING" id="399550.Smar_0889"/>
<dbReference type="GeneID" id="4907438"/>
<dbReference type="KEGG" id="smr:Smar_0889"/>
<dbReference type="eggNOG" id="arCOG04281">
    <property type="taxonomic scope" value="Archaea"/>
</dbReference>
<dbReference type="HOGENOM" id="CLU_034626_0_0_2"/>
<dbReference type="OrthoDB" id="8643at2157"/>
<dbReference type="Proteomes" id="UP000000254">
    <property type="component" value="Chromosome"/>
</dbReference>
<dbReference type="GO" id="GO:0005737">
    <property type="term" value="C:cytoplasm"/>
    <property type="evidence" value="ECO:0007669"/>
    <property type="project" value="TreeGrafter"/>
</dbReference>
<dbReference type="GO" id="GO:0000428">
    <property type="term" value="C:DNA-directed RNA polymerase complex"/>
    <property type="evidence" value="ECO:0007669"/>
    <property type="project" value="UniProtKB-KW"/>
</dbReference>
<dbReference type="GO" id="GO:0000178">
    <property type="term" value="C:exosome (RNase complex)"/>
    <property type="evidence" value="ECO:0007669"/>
    <property type="project" value="UniProtKB-KW"/>
</dbReference>
<dbReference type="GO" id="GO:1990077">
    <property type="term" value="C:primosome complex"/>
    <property type="evidence" value="ECO:0007669"/>
    <property type="project" value="UniProtKB-KW"/>
</dbReference>
<dbReference type="GO" id="GO:0003899">
    <property type="term" value="F:DNA-directed RNA polymerase activity"/>
    <property type="evidence" value="ECO:0007669"/>
    <property type="project" value="InterPro"/>
</dbReference>
<dbReference type="GO" id="GO:0046872">
    <property type="term" value="F:metal ion binding"/>
    <property type="evidence" value="ECO:0007669"/>
    <property type="project" value="UniProtKB-KW"/>
</dbReference>
<dbReference type="GO" id="GO:0008143">
    <property type="term" value="F:poly(A) binding"/>
    <property type="evidence" value="ECO:0007669"/>
    <property type="project" value="InterPro"/>
</dbReference>
<dbReference type="GO" id="GO:0006269">
    <property type="term" value="P:DNA replication, synthesis of primer"/>
    <property type="evidence" value="ECO:0007669"/>
    <property type="project" value="UniProtKB-UniRule"/>
</dbReference>
<dbReference type="CDD" id="cd01029">
    <property type="entry name" value="TOPRIM_primases"/>
    <property type="match status" value="1"/>
</dbReference>
<dbReference type="Gene3D" id="3.40.1360.10">
    <property type="match status" value="1"/>
</dbReference>
<dbReference type="HAMAP" id="MF_00007">
    <property type="entry name" value="DNA_primase_DnaG_arc"/>
    <property type="match status" value="1"/>
</dbReference>
<dbReference type="InterPro" id="IPR050219">
    <property type="entry name" value="DnaG_primase"/>
</dbReference>
<dbReference type="InterPro" id="IPR020607">
    <property type="entry name" value="Primase_DnaG_arc"/>
</dbReference>
<dbReference type="InterPro" id="IPR034154">
    <property type="entry name" value="TOPRIM_DnaG/twinkle"/>
</dbReference>
<dbReference type="InterPro" id="IPR006171">
    <property type="entry name" value="TOPRIM_dom"/>
</dbReference>
<dbReference type="NCBIfam" id="NF003108">
    <property type="entry name" value="PRK04031.1-1"/>
    <property type="match status" value="1"/>
</dbReference>
<dbReference type="PANTHER" id="PTHR30313">
    <property type="entry name" value="DNA PRIMASE"/>
    <property type="match status" value="1"/>
</dbReference>
<dbReference type="PANTHER" id="PTHR30313:SF2">
    <property type="entry name" value="DNA PRIMASE"/>
    <property type="match status" value="1"/>
</dbReference>
<dbReference type="Pfam" id="PF13662">
    <property type="entry name" value="Toprim_4"/>
    <property type="match status" value="1"/>
</dbReference>
<dbReference type="SMART" id="SM00493">
    <property type="entry name" value="TOPRIM"/>
    <property type="match status" value="1"/>
</dbReference>
<dbReference type="SUPFAM" id="SSF110455">
    <property type="entry name" value="Toprim domain"/>
    <property type="match status" value="1"/>
</dbReference>
<dbReference type="PROSITE" id="PS50880">
    <property type="entry name" value="TOPRIM"/>
    <property type="match status" value="1"/>
</dbReference>
<proteinExistence type="inferred from homology"/>
<protein>
    <recommendedName>
        <fullName evidence="1">DNA primase DnaG</fullName>
        <ecNumber evidence="1">2.7.7.101</ecNumber>
    </recommendedName>
</protein>
<comment type="function">
    <text evidence="1">RNA polymerase that catalyzes the synthesis of short RNA molecules used as primers for DNA polymerase during DNA replication. Also part of the exosome, which is a complex involved in RNA degradation. Acts as a poly(A)-binding protein that enhances the interaction between heteromeric, adenine-rich transcripts and the exosome.</text>
</comment>
<comment type="catalytic activity">
    <reaction evidence="1">
        <text>ssDNA + n NTP = ssDNA/pppN(pN)n-1 hybrid + (n-1) diphosphate.</text>
        <dbReference type="EC" id="2.7.7.101"/>
    </reaction>
</comment>
<comment type="cofactor">
    <cofactor evidence="1">
        <name>Mg(2+)</name>
        <dbReference type="ChEBI" id="CHEBI:18420"/>
    </cofactor>
    <text evidence="1">Binds two Mg(2+) per subunit.</text>
</comment>
<comment type="subunit">
    <text evidence="1">Forms a ternary complex with MCM helicase and DNA. Component of the archaeal exosome complex.</text>
</comment>
<comment type="similarity">
    <text evidence="1">Belongs to the archaeal DnaG primase family.</text>
</comment>